<dbReference type="EC" id="4.4.1.21" evidence="1"/>
<dbReference type="EMBL" id="CP000038">
    <property type="protein sequence ID" value="AAZ89441.1"/>
    <property type="molecule type" value="Genomic_DNA"/>
</dbReference>
<dbReference type="RefSeq" id="WP_001130211.1">
    <property type="nucleotide sequence ID" value="NC_007384.1"/>
</dbReference>
<dbReference type="SMR" id="Q3YYH1"/>
<dbReference type="GeneID" id="93779324"/>
<dbReference type="KEGG" id="ssn:SSON_2831"/>
<dbReference type="HOGENOM" id="CLU_107531_2_0_6"/>
<dbReference type="Proteomes" id="UP000002529">
    <property type="component" value="Chromosome"/>
</dbReference>
<dbReference type="GO" id="GO:0005506">
    <property type="term" value="F:iron ion binding"/>
    <property type="evidence" value="ECO:0007669"/>
    <property type="project" value="InterPro"/>
</dbReference>
<dbReference type="GO" id="GO:0043768">
    <property type="term" value="F:S-ribosylhomocysteine lyase activity"/>
    <property type="evidence" value="ECO:0007669"/>
    <property type="project" value="UniProtKB-UniRule"/>
</dbReference>
<dbReference type="GO" id="GO:0009372">
    <property type="term" value="P:quorum sensing"/>
    <property type="evidence" value="ECO:0007669"/>
    <property type="project" value="UniProtKB-UniRule"/>
</dbReference>
<dbReference type="FunFam" id="3.30.1360.80:FF:000001">
    <property type="entry name" value="S-ribosylhomocysteine lyase"/>
    <property type="match status" value="1"/>
</dbReference>
<dbReference type="Gene3D" id="3.30.1360.80">
    <property type="entry name" value="S-ribosylhomocysteinase (LuxS)"/>
    <property type="match status" value="1"/>
</dbReference>
<dbReference type="HAMAP" id="MF_00091">
    <property type="entry name" value="LuxS"/>
    <property type="match status" value="1"/>
</dbReference>
<dbReference type="InterPro" id="IPR037005">
    <property type="entry name" value="LuxS_sf"/>
</dbReference>
<dbReference type="InterPro" id="IPR011249">
    <property type="entry name" value="Metalloenz_LuxS/M16"/>
</dbReference>
<dbReference type="InterPro" id="IPR003815">
    <property type="entry name" value="S-ribosylhomocysteinase"/>
</dbReference>
<dbReference type="NCBIfam" id="NF002602">
    <property type="entry name" value="PRK02260.1-2"/>
    <property type="match status" value="1"/>
</dbReference>
<dbReference type="PANTHER" id="PTHR35799">
    <property type="entry name" value="S-RIBOSYLHOMOCYSTEINE LYASE"/>
    <property type="match status" value="1"/>
</dbReference>
<dbReference type="PANTHER" id="PTHR35799:SF1">
    <property type="entry name" value="S-RIBOSYLHOMOCYSTEINE LYASE"/>
    <property type="match status" value="1"/>
</dbReference>
<dbReference type="Pfam" id="PF02664">
    <property type="entry name" value="LuxS"/>
    <property type="match status" value="1"/>
</dbReference>
<dbReference type="PIRSF" id="PIRSF006160">
    <property type="entry name" value="AI2"/>
    <property type="match status" value="1"/>
</dbReference>
<dbReference type="PRINTS" id="PR01487">
    <property type="entry name" value="LUXSPROTEIN"/>
</dbReference>
<dbReference type="SUPFAM" id="SSF63411">
    <property type="entry name" value="LuxS/MPP-like metallohydrolase"/>
    <property type="match status" value="1"/>
</dbReference>
<accession>Q3YYH1</accession>
<evidence type="ECO:0000255" key="1">
    <source>
        <dbReference type="HAMAP-Rule" id="MF_00091"/>
    </source>
</evidence>
<feature type="chain" id="PRO_0000298033" description="S-ribosylhomocysteine lyase">
    <location>
        <begin position="1"/>
        <end position="171"/>
    </location>
</feature>
<feature type="binding site" evidence="1">
    <location>
        <position position="54"/>
    </location>
    <ligand>
        <name>Fe cation</name>
        <dbReference type="ChEBI" id="CHEBI:24875"/>
    </ligand>
</feature>
<feature type="binding site" evidence="1">
    <location>
        <position position="58"/>
    </location>
    <ligand>
        <name>Fe cation</name>
        <dbReference type="ChEBI" id="CHEBI:24875"/>
    </ligand>
</feature>
<feature type="binding site" evidence="1">
    <location>
        <position position="128"/>
    </location>
    <ligand>
        <name>Fe cation</name>
        <dbReference type="ChEBI" id="CHEBI:24875"/>
    </ligand>
</feature>
<gene>
    <name evidence="1" type="primary">luxS</name>
    <name type="ordered locus">SSON_2831</name>
</gene>
<comment type="function">
    <text evidence="1">Involved in the synthesis of autoinducer 2 (AI-2) which is secreted by bacteria and is used to communicate both the cell density and the metabolic potential of the environment. The regulation of gene expression in response to changes in cell density is called quorum sensing. Catalyzes the transformation of S-ribosylhomocysteine (RHC) to homocysteine (HC) and 4,5-dihydroxy-2,3-pentadione (DPD).</text>
</comment>
<comment type="catalytic activity">
    <reaction evidence="1">
        <text>S-(5-deoxy-D-ribos-5-yl)-L-homocysteine = (S)-4,5-dihydroxypentane-2,3-dione + L-homocysteine</text>
        <dbReference type="Rhea" id="RHEA:17753"/>
        <dbReference type="ChEBI" id="CHEBI:29484"/>
        <dbReference type="ChEBI" id="CHEBI:58195"/>
        <dbReference type="ChEBI" id="CHEBI:58199"/>
        <dbReference type="EC" id="4.4.1.21"/>
    </reaction>
</comment>
<comment type="cofactor">
    <cofactor evidence="1">
        <name>Fe cation</name>
        <dbReference type="ChEBI" id="CHEBI:24875"/>
    </cofactor>
    <text evidence="1">Binds 1 Fe cation per subunit.</text>
</comment>
<comment type="subunit">
    <text evidence="1">Homodimer.</text>
</comment>
<comment type="similarity">
    <text evidence="1">Belongs to the LuxS family.</text>
</comment>
<organism>
    <name type="scientific">Shigella sonnei (strain Ss046)</name>
    <dbReference type="NCBI Taxonomy" id="300269"/>
    <lineage>
        <taxon>Bacteria</taxon>
        <taxon>Pseudomonadati</taxon>
        <taxon>Pseudomonadota</taxon>
        <taxon>Gammaproteobacteria</taxon>
        <taxon>Enterobacterales</taxon>
        <taxon>Enterobacteriaceae</taxon>
        <taxon>Shigella</taxon>
    </lineage>
</organism>
<reference key="1">
    <citation type="journal article" date="2005" name="Nucleic Acids Res.">
        <title>Genome dynamics and diversity of Shigella species, the etiologic agents of bacillary dysentery.</title>
        <authorList>
            <person name="Yang F."/>
            <person name="Yang J."/>
            <person name="Zhang X."/>
            <person name="Chen L."/>
            <person name="Jiang Y."/>
            <person name="Yan Y."/>
            <person name="Tang X."/>
            <person name="Wang J."/>
            <person name="Xiong Z."/>
            <person name="Dong J."/>
            <person name="Xue Y."/>
            <person name="Zhu Y."/>
            <person name="Xu X."/>
            <person name="Sun L."/>
            <person name="Chen S."/>
            <person name="Nie H."/>
            <person name="Peng J."/>
            <person name="Xu J."/>
            <person name="Wang Y."/>
            <person name="Yuan Z."/>
            <person name="Wen Y."/>
            <person name="Yao Z."/>
            <person name="Shen Y."/>
            <person name="Qiang B."/>
            <person name="Hou Y."/>
            <person name="Yu J."/>
            <person name="Jin Q."/>
        </authorList>
    </citation>
    <scope>NUCLEOTIDE SEQUENCE [LARGE SCALE GENOMIC DNA]</scope>
    <source>
        <strain>Ss046</strain>
    </source>
</reference>
<protein>
    <recommendedName>
        <fullName evidence="1">S-ribosylhomocysteine lyase</fullName>
        <ecNumber evidence="1">4.4.1.21</ecNumber>
    </recommendedName>
    <alternativeName>
        <fullName evidence="1">AI-2 synthesis protein</fullName>
    </alternativeName>
    <alternativeName>
        <fullName evidence="1">Autoinducer-2 production protein LuxS</fullName>
    </alternativeName>
</protein>
<proteinExistence type="inferred from homology"/>
<sequence>MPLLDSFTVDHTRMEAPAVRVAKTMNTPHGDAITVFDLRFCVPNKEVMPERGIHTLEHLFAGFMRNHLNGNGVEIIDISPMGCRTGFYMSLIGTPDEQRVADAWKAAMEDVLKVQDQNQIPELNVYQCGTYQMHSLQEAQDIARSILERDVRINSNEELALPKEKLQELHI</sequence>
<keyword id="KW-0071">Autoinducer synthesis</keyword>
<keyword id="KW-0408">Iron</keyword>
<keyword id="KW-0456">Lyase</keyword>
<keyword id="KW-0479">Metal-binding</keyword>
<keyword id="KW-0673">Quorum sensing</keyword>
<keyword id="KW-1185">Reference proteome</keyword>
<name>LUXS_SHISS</name>